<protein>
    <recommendedName>
        <fullName>Histone H3-like 3</fullName>
    </recommendedName>
</protein>
<sequence length="136" mass="15402">MARTKQTARKSHGGKAPRTLLATKAARKSAPTTGGVKKPHRYRPGTVALREIRKYQKSTELLIRKLPFQRLVREIAQDYKTDLRFQSHAVLALQEAAEAYLVGLFEDTNLCAIHAKRVTIMPKDVQLARRIRGERA</sequence>
<feature type="chain" id="PRO_0000264607" description="Histone H3-like 3">
    <location>
        <begin position="1"/>
        <end position="136"/>
    </location>
</feature>
<feature type="region of interest" description="Disordered" evidence="3">
    <location>
        <begin position="1"/>
        <end position="42"/>
    </location>
</feature>
<feature type="compositionally biased region" description="Basic residues" evidence="3">
    <location>
        <begin position="1"/>
        <end position="15"/>
    </location>
</feature>
<feature type="modified residue" description="N6,N6,N6-trimethyllysine; alternate" evidence="2">
    <location>
        <position position="5"/>
    </location>
</feature>
<feature type="modified residue" description="N6,N6-dimethyllysine; alternate" evidence="2">
    <location>
        <position position="5"/>
    </location>
</feature>
<feature type="modified residue" description="N6-methyllysine; alternate" evidence="2">
    <location>
        <position position="5"/>
    </location>
</feature>
<feature type="modified residue" description="N6,N6,N6-trimethyllysine; alternate" evidence="2">
    <location>
        <position position="10"/>
    </location>
</feature>
<feature type="modified residue" description="N6,N6-dimethyllysine; alternate" evidence="2">
    <location>
        <position position="10"/>
    </location>
</feature>
<feature type="modified residue" description="N6-acetyllysine; alternate" evidence="2">
    <location>
        <position position="10"/>
    </location>
</feature>
<feature type="modified residue" description="N6-methyllysine; alternate" evidence="2">
    <location>
        <position position="10"/>
    </location>
</feature>
<feature type="modified residue" description="Phosphoserine" evidence="2">
    <location>
        <position position="11"/>
    </location>
</feature>
<feature type="modified residue" description="N6-acetyllysine" evidence="2">
    <location>
        <position position="15"/>
    </location>
</feature>
<feature type="modified residue" description="N6-acetyllysine; alternate" evidence="2">
    <location>
        <position position="24"/>
    </location>
</feature>
<feature type="modified residue" description="N6-methyllysine; alternate" evidence="2">
    <location>
        <position position="24"/>
    </location>
</feature>
<feature type="modified residue" description="N6,N6,N6-trimethyllysine; alternate" evidence="2">
    <location>
        <position position="28"/>
    </location>
</feature>
<feature type="modified residue" description="N6,N6-dimethyllysine; alternate" evidence="2">
    <location>
        <position position="28"/>
    </location>
</feature>
<feature type="modified residue" description="N6-methyllysine; alternate" evidence="2">
    <location>
        <position position="28"/>
    </location>
</feature>
<feature type="modified residue" description="Phosphoserine" evidence="2">
    <location>
        <position position="29"/>
    </location>
</feature>
<feature type="modified residue" description="N6,N6,N6-trimethyllysine; alternate" evidence="2">
    <location>
        <position position="37"/>
    </location>
</feature>
<feature type="modified residue" description="N6,N6-dimethyllysine; alternate" evidence="2">
    <location>
        <position position="37"/>
    </location>
</feature>
<feature type="modified residue" description="N6-methyllysine; alternate" evidence="2">
    <location>
        <position position="37"/>
    </location>
</feature>
<organism>
    <name type="scientific">Arabidopsis thaliana</name>
    <name type="common">Mouse-ear cress</name>
    <dbReference type="NCBI Taxonomy" id="3702"/>
    <lineage>
        <taxon>Eukaryota</taxon>
        <taxon>Viridiplantae</taxon>
        <taxon>Streptophyta</taxon>
        <taxon>Embryophyta</taxon>
        <taxon>Tracheophyta</taxon>
        <taxon>Spermatophyta</taxon>
        <taxon>Magnoliopsida</taxon>
        <taxon>eudicotyledons</taxon>
        <taxon>Gunneridae</taxon>
        <taxon>Pentapetalae</taxon>
        <taxon>rosids</taxon>
        <taxon>malvids</taxon>
        <taxon>Brassicales</taxon>
        <taxon>Brassicaceae</taxon>
        <taxon>Camelineae</taxon>
        <taxon>Arabidopsis</taxon>
    </lineage>
</organism>
<accession>Q9LR02</accession>
<name>H3L3_ARATH</name>
<comment type="function">
    <text evidence="1">Core component of nucleosome. Nucleosomes wrap and compact DNA into chromatin, limiting DNA accessibility to the cellular machineries which require DNA as a template. Histones thereby play a central role in transcription regulation, DNA repair, DNA replication and chromosomal stability. DNA accessibility is regulated via a complex set of post-translational modifications of histones, also called histone code, and nucleosome remodeling (By similarity).</text>
</comment>
<comment type="subunit">
    <text evidence="1">The nucleosome is a histone octamer containing two molecules each of H2A, H2B, H3 and H4 assembled in one H3-H4 heterotetramer and two H2A-H2B heterodimers. The octamer wraps approximately 147 bp of DNA (By similarity).</text>
</comment>
<comment type="subcellular location">
    <subcellularLocation>
        <location evidence="1">Nucleus</location>
    </subcellularLocation>
    <subcellularLocation>
        <location evidence="1">Chromosome</location>
    </subcellularLocation>
</comment>
<comment type="tissue specificity">
    <text evidence="4">Expressed in roots, seedlings, leaves and open flowers.</text>
</comment>
<comment type="similarity">
    <text evidence="5">Belongs to the histone H3 family.</text>
</comment>
<comment type="sequence caution" evidence="5">
    <conflict type="erroneous gene model prediction">
        <sequence resource="EMBL-CDS" id="AAF87128"/>
    </conflict>
</comment>
<dbReference type="EMBL" id="AC006434">
    <property type="protein sequence ID" value="AAF87128.1"/>
    <property type="status" value="ALT_SEQ"/>
    <property type="molecule type" value="Genomic_DNA"/>
</dbReference>
<dbReference type="EMBL" id="CP002684">
    <property type="protein sequence ID" value="AEE35737.1"/>
    <property type="molecule type" value="Genomic_DNA"/>
</dbReference>
<dbReference type="PIR" id="B96786">
    <property type="entry name" value="B96786"/>
</dbReference>
<dbReference type="RefSeq" id="NP_177690.1">
    <property type="nucleotide sequence ID" value="NM_106212.3"/>
</dbReference>
<dbReference type="SMR" id="Q9LR02"/>
<dbReference type="BioGRID" id="29114">
    <property type="interactions" value="8"/>
</dbReference>
<dbReference type="FunCoup" id="Q9LR02">
    <property type="interactions" value="671"/>
</dbReference>
<dbReference type="STRING" id="3702.Q9LR02"/>
<dbReference type="PaxDb" id="3702-AT1G75600.1"/>
<dbReference type="ProteomicsDB" id="247251"/>
<dbReference type="EnsemblPlants" id="AT1G75600.1">
    <property type="protein sequence ID" value="AT1G75600.1"/>
    <property type="gene ID" value="AT1G75600"/>
</dbReference>
<dbReference type="GeneID" id="843895"/>
<dbReference type="Gramene" id="AT1G75600.1">
    <property type="protein sequence ID" value="AT1G75600.1"/>
    <property type="gene ID" value="AT1G75600"/>
</dbReference>
<dbReference type="KEGG" id="ath:AT1G75600"/>
<dbReference type="Araport" id="AT1G75600"/>
<dbReference type="TAIR" id="AT1G75600">
    <property type="gene designation" value="HTR14"/>
</dbReference>
<dbReference type="eggNOG" id="KOG1745">
    <property type="taxonomic scope" value="Eukaryota"/>
</dbReference>
<dbReference type="HOGENOM" id="CLU_078295_4_0_1"/>
<dbReference type="InParanoid" id="Q9LR02"/>
<dbReference type="OMA" id="THIRITR"/>
<dbReference type="PhylomeDB" id="Q9LR02"/>
<dbReference type="PRO" id="PR:Q9LR02"/>
<dbReference type="Proteomes" id="UP000006548">
    <property type="component" value="Chromosome 1"/>
</dbReference>
<dbReference type="ExpressionAtlas" id="Q9LR02">
    <property type="expression patterns" value="baseline and differential"/>
</dbReference>
<dbReference type="GO" id="GO:0005739">
    <property type="term" value="C:mitochondrion"/>
    <property type="evidence" value="ECO:0007005"/>
    <property type="project" value="TAIR"/>
</dbReference>
<dbReference type="GO" id="GO:0000786">
    <property type="term" value="C:nucleosome"/>
    <property type="evidence" value="ECO:0007669"/>
    <property type="project" value="UniProtKB-KW"/>
</dbReference>
<dbReference type="GO" id="GO:0005634">
    <property type="term" value="C:nucleus"/>
    <property type="evidence" value="ECO:0007669"/>
    <property type="project" value="UniProtKB-SubCell"/>
</dbReference>
<dbReference type="GO" id="GO:0003677">
    <property type="term" value="F:DNA binding"/>
    <property type="evidence" value="ECO:0007669"/>
    <property type="project" value="UniProtKB-KW"/>
</dbReference>
<dbReference type="GO" id="GO:0046982">
    <property type="term" value="F:protein heterodimerization activity"/>
    <property type="evidence" value="ECO:0007669"/>
    <property type="project" value="InterPro"/>
</dbReference>
<dbReference type="GO" id="GO:0030527">
    <property type="term" value="F:structural constituent of chromatin"/>
    <property type="evidence" value="ECO:0007669"/>
    <property type="project" value="InterPro"/>
</dbReference>
<dbReference type="CDD" id="cd22911">
    <property type="entry name" value="HFD_H3"/>
    <property type="match status" value="1"/>
</dbReference>
<dbReference type="FunFam" id="1.10.20.10:FF:000078">
    <property type="entry name" value="Histone H3"/>
    <property type="match status" value="1"/>
</dbReference>
<dbReference type="FunFam" id="1.10.20.10:FF:000044">
    <property type="entry name" value="Histone H3.3"/>
    <property type="match status" value="1"/>
</dbReference>
<dbReference type="Gene3D" id="1.10.20.10">
    <property type="entry name" value="Histone, subunit A"/>
    <property type="match status" value="1"/>
</dbReference>
<dbReference type="InterPro" id="IPR009072">
    <property type="entry name" value="Histone-fold"/>
</dbReference>
<dbReference type="InterPro" id="IPR007125">
    <property type="entry name" value="Histone_H2A/H2B/H3"/>
</dbReference>
<dbReference type="InterPro" id="IPR000164">
    <property type="entry name" value="Histone_H3/CENP-A"/>
</dbReference>
<dbReference type="PANTHER" id="PTHR11426">
    <property type="entry name" value="HISTONE H3"/>
    <property type="match status" value="1"/>
</dbReference>
<dbReference type="Pfam" id="PF00125">
    <property type="entry name" value="Histone"/>
    <property type="match status" value="1"/>
</dbReference>
<dbReference type="PRINTS" id="PR00622">
    <property type="entry name" value="HISTONEH3"/>
</dbReference>
<dbReference type="SMART" id="SM00428">
    <property type="entry name" value="H3"/>
    <property type="match status" value="1"/>
</dbReference>
<dbReference type="SUPFAM" id="SSF47113">
    <property type="entry name" value="Histone-fold"/>
    <property type="match status" value="1"/>
</dbReference>
<dbReference type="PROSITE" id="PS00959">
    <property type="entry name" value="HISTONE_H3_2"/>
    <property type="match status" value="1"/>
</dbReference>
<proteinExistence type="evidence at transcript level"/>
<reference key="1">
    <citation type="journal article" date="2000" name="Nature">
        <title>Sequence and analysis of chromosome 1 of the plant Arabidopsis thaliana.</title>
        <authorList>
            <person name="Theologis A."/>
            <person name="Ecker J.R."/>
            <person name="Palm C.J."/>
            <person name="Federspiel N.A."/>
            <person name="Kaul S."/>
            <person name="White O."/>
            <person name="Alonso J."/>
            <person name="Altafi H."/>
            <person name="Araujo R."/>
            <person name="Bowman C.L."/>
            <person name="Brooks S.Y."/>
            <person name="Buehler E."/>
            <person name="Chan A."/>
            <person name="Chao Q."/>
            <person name="Chen H."/>
            <person name="Cheuk R.F."/>
            <person name="Chin C.W."/>
            <person name="Chung M.K."/>
            <person name="Conn L."/>
            <person name="Conway A.B."/>
            <person name="Conway A.R."/>
            <person name="Creasy T.H."/>
            <person name="Dewar K."/>
            <person name="Dunn P."/>
            <person name="Etgu P."/>
            <person name="Feldblyum T.V."/>
            <person name="Feng J.-D."/>
            <person name="Fong B."/>
            <person name="Fujii C.Y."/>
            <person name="Gill J.E."/>
            <person name="Goldsmith A.D."/>
            <person name="Haas B."/>
            <person name="Hansen N.F."/>
            <person name="Hughes B."/>
            <person name="Huizar L."/>
            <person name="Hunter J.L."/>
            <person name="Jenkins J."/>
            <person name="Johnson-Hopson C."/>
            <person name="Khan S."/>
            <person name="Khaykin E."/>
            <person name="Kim C.J."/>
            <person name="Koo H.L."/>
            <person name="Kremenetskaia I."/>
            <person name="Kurtz D.B."/>
            <person name="Kwan A."/>
            <person name="Lam B."/>
            <person name="Langin-Hooper S."/>
            <person name="Lee A."/>
            <person name="Lee J.M."/>
            <person name="Lenz C.A."/>
            <person name="Li J.H."/>
            <person name="Li Y.-P."/>
            <person name="Lin X."/>
            <person name="Liu S.X."/>
            <person name="Liu Z.A."/>
            <person name="Luros J.S."/>
            <person name="Maiti R."/>
            <person name="Marziali A."/>
            <person name="Militscher J."/>
            <person name="Miranda M."/>
            <person name="Nguyen M."/>
            <person name="Nierman W.C."/>
            <person name="Osborne B.I."/>
            <person name="Pai G."/>
            <person name="Peterson J."/>
            <person name="Pham P.K."/>
            <person name="Rizzo M."/>
            <person name="Rooney T."/>
            <person name="Rowley D."/>
            <person name="Sakano H."/>
            <person name="Salzberg S.L."/>
            <person name="Schwartz J.R."/>
            <person name="Shinn P."/>
            <person name="Southwick A.M."/>
            <person name="Sun H."/>
            <person name="Tallon L.J."/>
            <person name="Tambunga G."/>
            <person name="Toriumi M.J."/>
            <person name="Town C.D."/>
            <person name="Utterback T."/>
            <person name="Van Aken S."/>
            <person name="Vaysberg M."/>
            <person name="Vysotskaia V.S."/>
            <person name="Walker M."/>
            <person name="Wu D."/>
            <person name="Yu G."/>
            <person name="Fraser C.M."/>
            <person name="Venter J.C."/>
            <person name="Davis R.W."/>
        </authorList>
    </citation>
    <scope>NUCLEOTIDE SEQUENCE [LARGE SCALE GENOMIC DNA]</scope>
    <source>
        <strain>cv. Columbia</strain>
    </source>
</reference>
<reference key="2">
    <citation type="journal article" date="2017" name="Plant J.">
        <title>Araport11: a complete reannotation of the Arabidopsis thaliana reference genome.</title>
        <authorList>
            <person name="Cheng C.Y."/>
            <person name="Krishnakumar V."/>
            <person name="Chan A.P."/>
            <person name="Thibaud-Nissen F."/>
            <person name="Schobel S."/>
            <person name="Town C.D."/>
        </authorList>
    </citation>
    <scope>GENOME REANNOTATION</scope>
    <source>
        <strain>cv. Columbia</strain>
    </source>
</reference>
<reference key="3">
    <citation type="journal article" date="2005" name="Plant J.">
        <title>Analysis of the histone H3 gene family in Arabidopsis and identification of the male-gamete-specific variant AtMGH3.</title>
        <authorList>
            <person name="Okada T."/>
            <person name="Endo M."/>
            <person name="Singh M.B."/>
            <person name="Bhalla P.L."/>
        </authorList>
    </citation>
    <scope>IDENTIFICATION</scope>
    <scope>NOMENCLATURE</scope>
    <scope>TISSUE SPECIFICITY</scope>
</reference>
<gene>
    <name type="ordered locus">At1g75600</name>
    <name type="ORF">F10A5.19</name>
    <name type="ORF">F10A5.32</name>
    <name type="ORF">F10A5_23</name>
</gene>
<evidence type="ECO:0000250" key="1"/>
<evidence type="ECO:0000250" key="2">
    <source>
        <dbReference type="UniProtKB" id="P59226"/>
    </source>
</evidence>
<evidence type="ECO:0000256" key="3">
    <source>
        <dbReference type="SAM" id="MobiDB-lite"/>
    </source>
</evidence>
<evidence type="ECO:0000269" key="4">
    <source>
    </source>
</evidence>
<evidence type="ECO:0000305" key="5"/>
<keyword id="KW-0007">Acetylation</keyword>
<keyword id="KW-0158">Chromosome</keyword>
<keyword id="KW-0238">DNA-binding</keyword>
<keyword id="KW-0488">Methylation</keyword>
<keyword id="KW-0544">Nucleosome core</keyword>
<keyword id="KW-0539">Nucleus</keyword>
<keyword id="KW-0597">Phosphoprotein</keyword>
<keyword id="KW-1185">Reference proteome</keyword>